<accession>Q57RH0</accession>
<gene>
    <name evidence="1" type="primary">hutI</name>
    <name type="ordered locus">SCH_0785</name>
</gene>
<sequence>MRQLLPGNTVWRNIRLATMDPQRQAPYGLVDNQALIVREGHICDIVPETQLPVSGDNIHDMQGRLVTPGLIDCHTHLVFAGNRAAEWEQRLNGASYQHISAQGGGINATVSATRACAEETLYLLARERMMRLASEGVTLLEIKSGYGLELATEEKLLRVAAKLAAENAIDISPTLLAAHATPAEYRDDPDGYITLVCETMIPQLWQKGLFDAVDLFCESVGFNVAQSERVLQTAKALGIPVKGHVEQLSLLGGAQLVSRYQGLSADHIEYLDEAGVAAMRDGGTVGVLLPGAFYFLRETQRPPVELLRRYQVPVAVASDFNPGTSPFCSLHLAMNMACVQFGLTPEEAWAGVTRHAARALGRQATHGQLRAGYRADFVVWDAEQPVEIVYEPGRNPLYQRVYRGQIS</sequence>
<evidence type="ECO:0000255" key="1">
    <source>
        <dbReference type="HAMAP-Rule" id="MF_00372"/>
    </source>
</evidence>
<evidence type="ECO:0000305" key="2"/>
<proteinExistence type="inferred from homology"/>
<name>HUTI_SALCH</name>
<comment type="function">
    <text evidence="1">Catalyzes the hydrolytic cleavage of the carbon-nitrogen bond in imidazolone-5-propanoate to yield N-formimidoyl-L-glutamate. It is the third step in the universal histidine degradation pathway.</text>
</comment>
<comment type="catalytic activity">
    <reaction evidence="1">
        <text>4-imidazolone-5-propanoate + H2O = N-formimidoyl-L-glutamate</text>
        <dbReference type="Rhea" id="RHEA:23660"/>
        <dbReference type="ChEBI" id="CHEBI:15377"/>
        <dbReference type="ChEBI" id="CHEBI:58928"/>
        <dbReference type="ChEBI" id="CHEBI:77893"/>
        <dbReference type="EC" id="3.5.2.7"/>
    </reaction>
</comment>
<comment type="cofactor">
    <cofactor evidence="1">
        <name>Zn(2+)</name>
        <dbReference type="ChEBI" id="CHEBI:29105"/>
    </cofactor>
    <cofactor evidence="1">
        <name>Fe(3+)</name>
        <dbReference type="ChEBI" id="CHEBI:29034"/>
    </cofactor>
    <text evidence="1">Binds 1 zinc or iron ion per subunit.</text>
</comment>
<comment type="pathway">
    <text evidence="1">Amino-acid degradation; L-histidine degradation into L-glutamate; N-formimidoyl-L-glutamate from L-histidine: step 3/3.</text>
</comment>
<comment type="subcellular location">
    <subcellularLocation>
        <location evidence="1">Cytoplasm</location>
    </subcellularLocation>
</comment>
<comment type="similarity">
    <text evidence="1">Belongs to the metallo-dependent hydrolases superfamily. HutI family.</text>
</comment>
<comment type="sequence caution" evidence="2">
    <conflict type="erroneous initiation">
        <sequence resource="EMBL-CDS" id="AAX64691"/>
    </conflict>
</comment>
<protein>
    <recommendedName>
        <fullName evidence="1">Imidazolonepropionase</fullName>
        <ecNumber evidence="1">3.5.2.7</ecNumber>
    </recommendedName>
    <alternativeName>
        <fullName evidence="1">Imidazolone-5-propionate hydrolase</fullName>
    </alternativeName>
</protein>
<dbReference type="EC" id="3.5.2.7" evidence="1"/>
<dbReference type="EMBL" id="AE017220">
    <property type="protein sequence ID" value="AAX64691.1"/>
    <property type="status" value="ALT_INIT"/>
    <property type="molecule type" value="Genomic_DNA"/>
</dbReference>
<dbReference type="RefSeq" id="WP_001249499.1">
    <property type="nucleotide sequence ID" value="NC_006905.1"/>
</dbReference>
<dbReference type="SMR" id="Q57RH0"/>
<dbReference type="KEGG" id="sec:SCH_0785"/>
<dbReference type="HOGENOM" id="CLU_041647_0_0_6"/>
<dbReference type="UniPathway" id="UPA00379">
    <property type="reaction ID" value="UER00551"/>
</dbReference>
<dbReference type="Proteomes" id="UP000000538">
    <property type="component" value="Chromosome"/>
</dbReference>
<dbReference type="GO" id="GO:0005737">
    <property type="term" value="C:cytoplasm"/>
    <property type="evidence" value="ECO:0007669"/>
    <property type="project" value="UniProtKB-SubCell"/>
</dbReference>
<dbReference type="GO" id="GO:0050480">
    <property type="term" value="F:imidazolonepropionase activity"/>
    <property type="evidence" value="ECO:0007669"/>
    <property type="project" value="UniProtKB-UniRule"/>
</dbReference>
<dbReference type="GO" id="GO:0005506">
    <property type="term" value="F:iron ion binding"/>
    <property type="evidence" value="ECO:0007669"/>
    <property type="project" value="UniProtKB-UniRule"/>
</dbReference>
<dbReference type="GO" id="GO:0008270">
    <property type="term" value="F:zinc ion binding"/>
    <property type="evidence" value="ECO:0007669"/>
    <property type="project" value="UniProtKB-UniRule"/>
</dbReference>
<dbReference type="GO" id="GO:0019556">
    <property type="term" value="P:L-histidine catabolic process to glutamate and formamide"/>
    <property type="evidence" value="ECO:0007669"/>
    <property type="project" value="UniProtKB-UniPathway"/>
</dbReference>
<dbReference type="GO" id="GO:0019557">
    <property type="term" value="P:L-histidine catabolic process to glutamate and formate"/>
    <property type="evidence" value="ECO:0007669"/>
    <property type="project" value="UniProtKB-UniPathway"/>
</dbReference>
<dbReference type="CDD" id="cd01296">
    <property type="entry name" value="Imidazolone-5PH"/>
    <property type="match status" value="1"/>
</dbReference>
<dbReference type="FunFam" id="3.20.20.140:FF:000007">
    <property type="entry name" value="Imidazolonepropionase"/>
    <property type="match status" value="1"/>
</dbReference>
<dbReference type="Gene3D" id="3.20.20.140">
    <property type="entry name" value="Metal-dependent hydrolases"/>
    <property type="match status" value="1"/>
</dbReference>
<dbReference type="Gene3D" id="2.30.40.10">
    <property type="entry name" value="Urease, subunit C, domain 1"/>
    <property type="match status" value="1"/>
</dbReference>
<dbReference type="HAMAP" id="MF_00372">
    <property type="entry name" value="HutI"/>
    <property type="match status" value="1"/>
</dbReference>
<dbReference type="InterPro" id="IPR006680">
    <property type="entry name" value="Amidohydro-rel"/>
</dbReference>
<dbReference type="InterPro" id="IPR005920">
    <property type="entry name" value="HutI"/>
</dbReference>
<dbReference type="InterPro" id="IPR011059">
    <property type="entry name" value="Metal-dep_hydrolase_composite"/>
</dbReference>
<dbReference type="InterPro" id="IPR032466">
    <property type="entry name" value="Metal_Hydrolase"/>
</dbReference>
<dbReference type="NCBIfam" id="TIGR01224">
    <property type="entry name" value="hutI"/>
    <property type="match status" value="1"/>
</dbReference>
<dbReference type="PANTHER" id="PTHR42752">
    <property type="entry name" value="IMIDAZOLONEPROPIONASE"/>
    <property type="match status" value="1"/>
</dbReference>
<dbReference type="PANTHER" id="PTHR42752:SF1">
    <property type="entry name" value="IMIDAZOLONEPROPIONASE-RELATED"/>
    <property type="match status" value="1"/>
</dbReference>
<dbReference type="Pfam" id="PF01979">
    <property type="entry name" value="Amidohydro_1"/>
    <property type="match status" value="1"/>
</dbReference>
<dbReference type="SUPFAM" id="SSF51338">
    <property type="entry name" value="Composite domain of metallo-dependent hydrolases"/>
    <property type="match status" value="1"/>
</dbReference>
<dbReference type="SUPFAM" id="SSF51556">
    <property type="entry name" value="Metallo-dependent hydrolases"/>
    <property type="match status" value="1"/>
</dbReference>
<feature type="chain" id="PRO_0000306504" description="Imidazolonepropionase">
    <location>
        <begin position="1"/>
        <end position="407"/>
    </location>
</feature>
<feature type="binding site" evidence="1">
    <location>
        <position position="74"/>
    </location>
    <ligand>
        <name>Fe(3+)</name>
        <dbReference type="ChEBI" id="CHEBI:29034"/>
    </ligand>
</feature>
<feature type="binding site" evidence="1">
    <location>
        <position position="74"/>
    </location>
    <ligand>
        <name>Zn(2+)</name>
        <dbReference type="ChEBI" id="CHEBI:29105"/>
    </ligand>
</feature>
<feature type="binding site" evidence="1">
    <location>
        <position position="76"/>
    </location>
    <ligand>
        <name>Fe(3+)</name>
        <dbReference type="ChEBI" id="CHEBI:29034"/>
    </ligand>
</feature>
<feature type="binding site" evidence="1">
    <location>
        <position position="76"/>
    </location>
    <ligand>
        <name>Zn(2+)</name>
        <dbReference type="ChEBI" id="CHEBI:29105"/>
    </ligand>
</feature>
<feature type="binding site" evidence="1">
    <location>
        <position position="83"/>
    </location>
    <ligand>
        <name>4-imidazolone-5-propanoate</name>
        <dbReference type="ChEBI" id="CHEBI:77893"/>
    </ligand>
</feature>
<feature type="binding site" evidence="1">
    <location>
        <position position="146"/>
    </location>
    <ligand>
        <name>4-imidazolone-5-propanoate</name>
        <dbReference type="ChEBI" id="CHEBI:77893"/>
    </ligand>
</feature>
<feature type="binding site" evidence="1">
    <location>
        <position position="146"/>
    </location>
    <ligand>
        <name>N-formimidoyl-L-glutamate</name>
        <dbReference type="ChEBI" id="CHEBI:58928"/>
    </ligand>
</feature>
<feature type="binding site" evidence="1">
    <location>
        <position position="179"/>
    </location>
    <ligand>
        <name>4-imidazolone-5-propanoate</name>
        <dbReference type="ChEBI" id="CHEBI:77893"/>
    </ligand>
</feature>
<feature type="binding site" evidence="1">
    <location>
        <position position="244"/>
    </location>
    <ligand>
        <name>Fe(3+)</name>
        <dbReference type="ChEBI" id="CHEBI:29034"/>
    </ligand>
</feature>
<feature type="binding site" evidence="1">
    <location>
        <position position="244"/>
    </location>
    <ligand>
        <name>Zn(2+)</name>
        <dbReference type="ChEBI" id="CHEBI:29105"/>
    </ligand>
</feature>
<feature type="binding site" evidence="1">
    <location>
        <position position="247"/>
    </location>
    <ligand>
        <name>4-imidazolone-5-propanoate</name>
        <dbReference type="ChEBI" id="CHEBI:77893"/>
    </ligand>
</feature>
<feature type="binding site" evidence="1">
    <location>
        <position position="319"/>
    </location>
    <ligand>
        <name>Fe(3+)</name>
        <dbReference type="ChEBI" id="CHEBI:29034"/>
    </ligand>
</feature>
<feature type="binding site" evidence="1">
    <location>
        <position position="319"/>
    </location>
    <ligand>
        <name>Zn(2+)</name>
        <dbReference type="ChEBI" id="CHEBI:29105"/>
    </ligand>
</feature>
<feature type="binding site" evidence="1">
    <location>
        <position position="321"/>
    </location>
    <ligand>
        <name>N-formimidoyl-L-glutamate</name>
        <dbReference type="ChEBI" id="CHEBI:58928"/>
    </ligand>
</feature>
<feature type="binding site" evidence="1">
    <location>
        <position position="323"/>
    </location>
    <ligand>
        <name>N-formimidoyl-L-glutamate</name>
        <dbReference type="ChEBI" id="CHEBI:58928"/>
    </ligand>
</feature>
<feature type="binding site" evidence="1">
    <location>
        <position position="324"/>
    </location>
    <ligand>
        <name>4-imidazolone-5-propanoate</name>
        <dbReference type="ChEBI" id="CHEBI:77893"/>
    </ligand>
</feature>
<keyword id="KW-0963">Cytoplasm</keyword>
<keyword id="KW-0369">Histidine metabolism</keyword>
<keyword id="KW-0378">Hydrolase</keyword>
<keyword id="KW-0408">Iron</keyword>
<keyword id="KW-0479">Metal-binding</keyword>
<keyword id="KW-0862">Zinc</keyword>
<reference key="1">
    <citation type="journal article" date="2005" name="Nucleic Acids Res.">
        <title>The genome sequence of Salmonella enterica serovar Choleraesuis, a highly invasive and resistant zoonotic pathogen.</title>
        <authorList>
            <person name="Chiu C.-H."/>
            <person name="Tang P."/>
            <person name="Chu C."/>
            <person name="Hu S."/>
            <person name="Bao Q."/>
            <person name="Yu J."/>
            <person name="Chou Y.-Y."/>
            <person name="Wang H.-S."/>
            <person name="Lee Y.-S."/>
        </authorList>
    </citation>
    <scope>NUCLEOTIDE SEQUENCE [LARGE SCALE GENOMIC DNA]</scope>
    <source>
        <strain>SC-B67</strain>
    </source>
</reference>
<organism>
    <name type="scientific">Salmonella choleraesuis (strain SC-B67)</name>
    <dbReference type="NCBI Taxonomy" id="321314"/>
    <lineage>
        <taxon>Bacteria</taxon>
        <taxon>Pseudomonadati</taxon>
        <taxon>Pseudomonadota</taxon>
        <taxon>Gammaproteobacteria</taxon>
        <taxon>Enterobacterales</taxon>
        <taxon>Enterobacteriaceae</taxon>
        <taxon>Salmonella</taxon>
    </lineage>
</organism>